<dbReference type="EC" id="4.1.2.-" evidence="8"/>
<dbReference type="EMBL" id="GU574477">
    <property type="protein sequence ID" value="ADI24936.1"/>
    <property type="molecule type" value="Genomic_DNA"/>
</dbReference>
<dbReference type="SMR" id="D7PHZ0"/>
<dbReference type="UniPathway" id="UPA00213"/>
<dbReference type="GO" id="GO:0005829">
    <property type="term" value="C:cytosol"/>
    <property type="evidence" value="ECO:0007669"/>
    <property type="project" value="TreeGrafter"/>
</dbReference>
<dbReference type="GO" id="GO:0008732">
    <property type="term" value="F:L-allo-threonine aldolase activity"/>
    <property type="evidence" value="ECO:0007669"/>
    <property type="project" value="TreeGrafter"/>
</dbReference>
<dbReference type="GO" id="GO:0006545">
    <property type="term" value="P:glycine biosynthetic process"/>
    <property type="evidence" value="ECO:0007669"/>
    <property type="project" value="TreeGrafter"/>
</dbReference>
<dbReference type="GO" id="GO:0016114">
    <property type="term" value="P:terpenoid biosynthetic process"/>
    <property type="evidence" value="ECO:0007669"/>
    <property type="project" value="UniProtKB-UniPathway"/>
</dbReference>
<dbReference type="GO" id="GO:0006567">
    <property type="term" value="P:threonine catabolic process"/>
    <property type="evidence" value="ECO:0007669"/>
    <property type="project" value="TreeGrafter"/>
</dbReference>
<dbReference type="GO" id="GO:0140872">
    <property type="term" value="P:viridicatumtoxin biosynthetic process"/>
    <property type="evidence" value="ECO:0000304"/>
    <property type="project" value="GO_Central"/>
</dbReference>
<dbReference type="FunFam" id="3.40.640.10:FF:000030">
    <property type="entry name" value="Low-specificity L-threonine aldolase"/>
    <property type="match status" value="1"/>
</dbReference>
<dbReference type="Gene3D" id="3.90.1150.10">
    <property type="entry name" value="Aspartate Aminotransferase, domain 1"/>
    <property type="match status" value="1"/>
</dbReference>
<dbReference type="Gene3D" id="3.40.640.10">
    <property type="entry name" value="Type I PLP-dependent aspartate aminotransferase-like (Major domain)"/>
    <property type="match status" value="1"/>
</dbReference>
<dbReference type="InterPro" id="IPR001597">
    <property type="entry name" value="ArAA_b-elim_lyase/Thr_aldolase"/>
</dbReference>
<dbReference type="InterPro" id="IPR023603">
    <property type="entry name" value="Low_specificity_L-TA-like"/>
</dbReference>
<dbReference type="InterPro" id="IPR015424">
    <property type="entry name" value="PyrdxlP-dep_Trfase"/>
</dbReference>
<dbReference type="InterPro" id="IPR015421">
    <property type="entry name" value="PyrdxlP-dep_Trfase_major"/>
</dbReference>
<dbReference type="InterPro" id="IPR015422">
    <property type="entry name" value="PyrdxlP-dep_Trfase_small"/>
</dbReference>
<dbReference type="NCBIfam" id="NF041359">
    <property type="entry name" value="GntG_guanitoxin"/>
    <property type="match status" value="1"/>
</dbReference>
<dbReference type="PANTHER" id="PTHR48097:SF9">
    <property type="entry name" value="L-THREONINE ALDOLASE"/>
    <property type="match status" value="1"/>
</dbReference>
<dbReference type="PANTHER" id="PTHR48097">
    <property type="entry name" value="L-THREONINE ALDOLASE-RELATED"/>
    <property type="match status" value="1"/>
</dbReference>
<dbReference type="Pfam" id="PF01212">
    <property type="entry name" value="Beta_elim_lyase"/>
    <property type="match status" value="1"/>
</dbReference>
<dbReference type="PIRSF" id="PIRSF017617">
    <property type="entry name" value="Thr_aldolase"/>
    <property type="match status" value="1"/>
</dbReference>
<dbReference type="SUPFAM" id="SSF53383">
    <property type="entry name" value="PLP-dependent transferases"/>
    <property type="match status" value="1"/>
</dbReference>
<keyword id="KW-0456">Lyase</keyword>
<keyword id="KW-0663">Pyridoxal phosphate</keyword>
<feature type="chain" id="PRO_0000436820" description="Aldolase vrtJ">
    <location>
        <begin position="1"/>
        <end position="388"/>
    </location>
</feature>
<feature type="modified residue" description="N6-(pyridoxal phosphate)lysine" evidence="1">
    <location>
        <position position="241"/>
    </location>
</feature>
<organism>
    <name type="scientific">Penicillium aethiopicum</name>
    <dbReference type="NCBI Taxonomy" id="36650"/>
    <lineage>
        <taxon>Eukaryota</taxon>
        <taxon>Fungi</taxon>
        <taxon>Dikarya</taxon>
        <taxon>Ascomycota</taxon>
        <taxon>Pezizomycotina</taxon>
        <taxon>Eurotiomycetes</taxon>
        <taxon>Eurotiomycetidae</taxon>
        <taxon>Eurotiales</taxon>
        <taxon>Aspergillaceae</taxon>
        <taxon>Penicillium</taxon>
    </lineage>
</organism>
<sequence>MTNSPIADLVHHPERVQSPSLVNSKMNGDAKAVTEWTEPGPAAFDFRSDTVTRPTEQMLAAIAATTLQDDDFRQDPTTLGLEAWMAELTGKAAGLFVVSGTMGNQLGVRAHLQSPPHSVLCDARSHLVTHEAGGVASLSGAMVSCVTPVNGRYMTQADLEAHVNRGTLITDCPTRLVVLEIPLGGVILPLDKCRRISEWARAQGIALHLDGARLWEAVAAGAGSLRDYCACFDSVSLCFSKGLGAPIGSVLVGSETLRERARWIRKSIGGGMRQAGVVCAAARVAVEATFLGGLLKRSHARARDIATFWEIHGGRLTYPTETNMVWLDLEAVGWTPERLIRRGAELGLRFMGARLVVHYQIGDEAIGRLQDLMLEILVSGLVDHPRDS</sequence>
<evidence type="ECO:0000250" key="1">
    <source>
        <dbReference type="UniProtKB" id="O07051"/>
    </source>
</evidence>
<evidence type="ECO:0000269" key="2">
    <source>
    </source>
</evidence>
<evidence type="ECO:0000269" key="3">
    <source>
    </source>
</evidence>
<evidence type="ECO:0000269" key="4">
    <source>
    </source>
</evidence>
<evidence type="ECO:0000269" key="5">
    <source>
    </source>
</evidence>
<evidence type="ECO:0000303" key="6">
    <source>
    </source>
</evidence>
<evidence type="ECO:0000305" key="7"/>
<evidence type="ECO:0000305" key="8">
    <source>
    </source>
</evidence>
<name>VRTJ_PENAE</name>
<comment type="function">
    <text evidence="3 4">Aldolase; part of the gene cluster that mediates the biosynthesis of viridicatumtoxin, a tetracycline-like fungal meroterpenoid with a unique, fused spirobicyclic ring system (PubMed:20534346). The first step of the pathway is the production of the malonamoyl-CoA starter unit for the polyketide synthase vrtA (PubMed:20534346). The aldolase vrtJ may be involved in the synthesis of the malonamate substrate for malonamoyl-CoA synthetase vrtB (PubMed:20534346). The polyketide synthase vrtA then may utilize the malonamoyl-CoA starter unit, followed by sequential condensation of eight malonyl-CoA units to form the polyketide backbone (PubMed:20534346). The cyclization of the last ring could be mediated by the lactamase-like protein vrtG (PubMed:20534346). The proposed post-PKS tailoring steps are a hydroxylation at C5 catalyzed the cytochrome P450 monooxygenase vrtE, a hydroxylation at C12a catalyzed by VrtH and/or VrtI, and an O-methylation by the O-methyltransferase vrtF (PubMed:20534346, PubMed:24161266). VrtC is then proposed to catalyze the transfer of a geranyl group synthesized by vrtD to the aromatic C ring of the tetracyclic polyketide intermediate of viridicatumtoxin to yield previridicatumtoxin (PubMed:20534346). Finally, the cytochrome P450 monooxygenase vrtK catalyzes the spirocyclization of the geranyl moiety of previridicatumtoxin to afford viridicatumtoxin (PubMed:24161266).</text>
</comment>
<comment type="cofactor">
    <cofactor evidence="1">
        <name>pyridoxal 5'-phosphate</name>
        <dbReference type="ChEBI" id="CHEBI:597326"/>
    </cofactor>
</comment>
<comment type="pathway">
    <text evidence="3">Secondary metabolite biosynthesis; terpenoid biosynthesis.</text>
</comment>
<comment type="biotechnology">
    <text evidence="2 5">Viridicatumtoxin and its derivative, viridicatumtoxin B, exhibit anti-methicillin-resistant Staphylococcus aureus (anti-MRSA) activity (PubMed:19168978). Moreover, viridicatumtoxin and a C2 acetyl analog, spirohexaline, have been demonstrated to inhibit bacterial undecaprenyl diphosphate synthase, a potential new target for antibiotic development (PubMed:27049441).</text>
</comment>
<comment type="similarity">
    <text evidence="7">Belongs to the threonine aldolase family.</text>
</comment>
<protein>
    <recommendedName>
        <fullName evidence="6">Aldolase vrtJ</fullName>
        <ecNumber evidence="8">4.1.2.-</ecNumber>
    </recommendedName>
    <alternativeName>
        <fullName evidence="6">Viridicatumtoxin synthesis protein J</fullName>
    </alternativeName>
</protein>
<gene>
    <name evidence="6" type="primary">vrtJ</name>
</gene>
<proteinExistence type="evidence at protein level"/>
<accession>D7PHZ0</accession>
<reference key="1">
    <citation type="journal article" date="2010" name="Chem. Biol.">
        <title>Identification of the viridicatumtoxin and griseofulvin gene clusters from Penicillium aethiopicum.</title>
        <authorList>
            <person name="Chooi Y.H."/>
            <person name="Cacho R."/>
            <person name="Tang Y."/>
        </authorList>
    </citation>
    <scope>NUCLEOTIDE SEQUENCE [GENOMIC DNA]</scope>
    <scope>FUNCTION</scope>
    <source>
        <strain>IBT 5753</strain>
    </source>
</reference>
<reference key="2">
    <citation type="journal article" date="2008" name="J. Antibiot.">
        <title>Viridicatumtoxin B, a new anti-MRSA agent from Penicillium sp. FR11.</title>
        <authorList>
            <person name="Zheng C.J."/>
            <person name="Yu H.E."/>
            <person name="Kim E.H."/>
            <person name="Kim W.G."/>
        </authorList>
    </citation>
    <scope>BIOTECHNOLOGY</scope>
</reference>
<reference key="3">
    <citation type="journal article" date="2013" name="J. Am. Chem. Soc.">
        <title>A cytochrome P450 serves as an unexpected terpene cyclase during fungal meroterpenoid biosynthesis.</title>
        <authorList>
            <person name="Chooi Y.H."/>
            <person name="Hong Y.J."/>
            <person name="Cacho R.A."/>
            <person name="Tantillo D.J."/>
            <person name="Tang Y."/>
        </authorList>
    </citation>
    <scope>FUNCTION</scope>
</reference>
<reference key="4">
    <citation type="journal article" date="2016" name="J. Antibiot.">
        <title>Inhibition of bacterial undecaprenyl pyrophosphate synthase by small fungal molecules.</title>
        <authorList>
            <person name="Inokoshi J."/>
            <person name="Nakamura Y."/>
            <person name="Komada S."/>
            <person name="Komatsu K."/>
            <person name="Umeyama H."/>
            <person name="Tomoda H."/>
        </authorList>
    </citation>
    <scope>BIOTECHNOLOGY</scope>
</reference>